<accession>Q2TAP8</accession>
<evidence type="ECO:0000255" key="1">
    <source>
        <dbReference type="PROSITE-ProRule" id="PRU01150"/>
    </source>
</evidence>
<evidence type="ECO:0000305" key="2"/>
<protein>
    <recommendedName>
        <fullName>Coiled-coil-helix-coiled-coil-helix domain-containing protein 7</fullName>
    </recommendedName>
</protein>
<feature type="chain" id="PRO_0000289260" description="Coiled-coil-helix-coiled-coil-helix domain-containing protein 7">
    <location>
        <begin position="1"/>
        <end position="84"/>
    </location>
</feature>
<feature type="domain" description="CHCH" evidence="1">
    <location>
        <begin position="12"/>
        <end position="54"/>
    </location>
</feature>
<feature type="short sequence motif" description="Cx9C motif 1" evidence="1">
    <location>
        <begin position="15"/>
        <end position="25"/>
    </location>
</feature>
<feature type="short sequence motif" description="Cx9C motif 2" evidence="1">
    <location>
        <begin position="36"/>
        <end position="46"/>
    </location>
</feature>
<feature type="disulfide bond" evidence="1">
    <location>
        <begin position="15"/>
        <end position="46"/>
    </location>
</feature>
<feature type="disulfide bond" evidence="1">
    <location>
        <begin position="25"/>
        <end position="36"/>
    </location>
</feature>
<reference key="1">
    <citation type="submission" date="2005-12" db="EMBL/GenBank/DDBJ databases">
        <authorList>
            <consortium name="NIH - Xenopus Gene Collection (XGC) project"/>
        </authorList>
    </citation>
    <scope>NUCLEOTIDE SEQUENCE [LARGE SCALE MRNA]</scope>
    <source>
        <tissue>Testis</tissue>
    </source>
</reference>
<dbReference type="EMBL" id="BC110787">
    <property type="protein sequence ID" value="AAI10788.1"/>
    <property type="molecule type" value="mRNA"/>
</dbReference>
<dbReference type="RefSeq" id="NP_001165230.1">
    <property type="nucleotide sequence ID" value="NM_001171759.1"/>
</dbReference>
<dbReference type="RefSeq" id="XP_018122210.1">
    <property type="nucleotide sequence ID" value="XM_018266721.1"/>
</dbReference>
<dbReference type="RefSeq" id="XP_018122211.1">
    <property type="nucleotide sequence ID" value="XM_018266722.1"/>
</dbReference>
<dbReference type="RefSeq" id="XP_018122212.1">
    <property type="nucleotide sequence ID" value="XM_018266723.1"/>
</dbReference>
<dbReference type="SMR" id="Q2TAP8"/>
<dbReference type="DNASU" id="735014"/>
<dbReference type="GeneID" id="735014"/>
<dbReference type="KEGG" id="xla:735014"/>
<dbReference type="AGR" id="Xenbase:XB-GENE-6254513"/>
<dbReference type="CTD" id="735014"/>
<dbReference type="Xenbase" id="XB-GENE-6254513">
    <property type="gene designation" value="chchd7.L"/>
</dbReference>
<dbReference type="OMA" id="QELSYKC"/>
<dbReference type="OrthoDB" id="9971592at2759"/>
<dbReference type="Proteomes" id="UP000186698">
    <property type="component" value="Chromosome 6L"/>
</dbReference>
<dbReference type="Bgee" id="735014">
    <property type="expression patterns" value="Expressed in testis and 19 other cell types or tissues"/>
</dbReference>
<dbReference type="GO" id="GO:0005758">
    <property type="term" value="C:mitochondrial intermembrane space"/>
    <property type="evidence" value="ECO:0007669"/>
    <property type="project" value="UniProtKB-SubCell"/>
</dbReference>
<dbReference type="GO" id="GO:0005739">
    <property type="term" value="C:mitochondrion"/>
    <property type="evidence" value="ECO:0000318"/>
    <property type="project" value="GO_Central"/>
</dbReference>
<dbReference type="GO" id="GO:0033108">
    <property type="term" value="P:mitochondrial respiratory chain complex assembly"/>
    <property type="evidence" value="ECO:0000318"/>
    <property type="project" value="GO_Central"/>
</dbReference>
<dbReference type="InterPro" id="IPR051040">
    <property type="entry name" value="COX23"/>
</dbReference>
<dbReference type="InterPro" id="IPR009069">
    <property type="entry name" value="Cys_alpha_HP_mot_SF"/>
</dbReference>
<dbReference type="PANTHER" id="PTHR46811">
    <property type="entry name" value="COILED-COIL-HELIX-COILED-COIL-HELIX DOMAIN-CONTAINING PROTEIN 7"/>
    <property type="match status" value="1"/>
</dbReference>
<dbReference type="PANTHER" id="PTHR46811:SF1">
    <property type="entry name" value="COILED-COIL-HELIX-COILED-COIL-HELIX DOMAIN-CONTAINING PROTEIN 7"/>
    <property type="match status" value="1"/>
</dbReference>
<dbReference type="SUPFAM" id="SSF47072">
    <property type="entry name" value="Cysteine alpha-hairpin motif"/>
    <property type="match status" value="1"/>
</dbReference>
<dbReference type="PROSITE" id="PS51808">
    <property type="entry name" value="CHCH"/>
    <property type="match status" value="1"/>
</dbReference>
<keyword id="KW-1015">Disulfide bond</keyword>
<keyword id="KW-0496">Mitochondrion</keyword>
<keyword id="KW-1185">Reference proteome</keyword>
<organism>
    <name type="scientific">Xenopus laevis</name>
    <name type="common">African clawed frog</name>
    <dbReference type="NCBI Taxonomy" id="8355"/>
    <lineage>
        <taxon>Eukaryota</taxon>
        <taxon>Metazoa</taxon>
        <taxon>Chordata</taxon>
        <taxon>Craniata</taxon>
        <taxon>Vertebrata</taxon>
        <taxon>Euteleostomi</taxon>
        <taxon>Amphibia</taxon>
        <taxon>Batrachia</taxon>
        <taxon>Anura</taxon>
        <taxon>Pipoidea</taxon>
        <taxon>Pipidae</taxon>
        <taxon>Xenopodinae</taxon>
        <taxon>Xenopus</taxon>
        <taxon>Xenopus</taxon>
    </lineage>
</organism>
<comment type="subcellular location">
    <subcellularLocation>
        <location evidence="2">Mitochondrion intermembrane space</location>
    </subcellularLocation>
</comment>
<comment type="similarity">
    <text evidence="2">Belongs to the CHCHD7 family.</text>
</comment>
<name>CHCH7_XENLA</name>
<gene>
    <name type="primary">chchd7</name>
</gene>
<sequence>MSRIRRMRDLDSNPCLEETDASTKCMDENQYQKDLCTSYFIKYKNCRKFWNGIMITRRREGTVPYMPAAEERKQILESLESLPY</sequence>
<proteinExistence type="inferred from homology"/>